<protein>
    <recommendedName>
        <fullName>Prolactin</fullName>
        <shortName>PRL</shortName>
    </recommendedName>
</protein>
<keyword id="KW-0903">Direct protein sequencing</keyword>
<keyword id="KW-1015">Disulfide bond</keyword>
<keyword id="KW-0372">Hormone</keyword>
<keyword id="KW-0421">Lactation</keyword>
<keyword id="KW-0597">Phosphoprotein</keyword>
<keyword id="KW-0964">Secreted</keyword>
<reference key="1">
    <citation type="journal article" date="1985" name="Biokhimiia">
        <title>Primary structure of whale prolactin.</title>
        <authorList>
            <person name="Karaseva L.I."/>
            <person name="Pankov Y.A."/>
        </authorList>
    </citation>
    <scope>PROTEIN SEQUENCE</scope>
</reference>
<feature type="chain" id="PRO_0000181317" description="Prolactin">
    <location>
        <begin position="1"/>
        <end position="199"/>
    </location>
</feature>
<feature type="modified residue" description="Phosphoserine" evidence="3">
    <location>
        <position position="26"/>
    </location>
</feature>
<feature type="modified residue" description="Phosphoserine" evidence="3">
    <location>
        <position position="34"/>
    </location>
</feature>
<feature type="modified residue" description="Phosphoserine" evidence="3">
    <location>
        <position position="90"/>
    </location>
</feature>
<feature type="disulfide bond" evidence="1">
    <location>
        <begin position="4"/>
        <end position="11"/>
    </location>
</feature>
<feature type="disulfide bond" evidence="1">
    <location>
        <begin position="58"/>
        <end position="174"/>
    </location>
</feature>
<feature type="disulfide bond" evidence="1">
    <location>
        <begin position="191"/>
        <end position="199"/>
    </location>
</feature>
<feature type="unsure residue" description="Q or E">
    <location>
        <position position="74"/>
    </location>
</feature>
<feature type="unsure residue" description="D or N">
    <location>
        <position position="93"/>
    </location>
</feature>
<dbReference type="PIR" id="PN0128">
    <property type="entry name" value="PN0128"/>
</dbReference>
<dbReference type="SMR" id="P33089"/>
<dbReference type="GO" id="GO:0005615">
    <property type="term" value="C:extracellular space"/>
    <property type="evidence" value="ECO:0007669"/>
    <property type="project" value="TreeGrafter"/>
</dbReference>
<dbReference type="GO" id="GO:0005179">
    <property type="term" value="F:hormone activity"/>
    <property type="evidence" value="ECO:0007669"/>
    <property type="project" value="UniProtKB-KW"/>
</dbReference>
<dbReference type="GO" id="GO:0005148">
    <property type="term" value="F:prolactin receptor binding"/>
    <property type="evidence" value="ECO:0007669"/>
    <property type="project" value="TreeGrafter"/>
</dbReference>
<dbReference type="GO" id="GO:0007565">
    <property type="term" value="P:female pregnancy"/>
    <property type="evidence" value="ECO:0007669"/>
    <property type="project" value="TreeGrafter"/>
</dbReference>
<dbReference type="GO" id="GO:0007595">
    <property type="term" value="P:lactation"/>
    <property type="evidence" value="ECO:0007669"/>
    <property type="project" value="UniProtKB-KW"/>
</dbReference>
<dbReference type="GO" id="GO:0008284">
    <property type="term" value="P:positive regulation of cell population proliferation"/>
    <property type="evidence" value="ECO:0007669"/>
    <property type="project" value="TreeGrafter"/>
</dbReference>
<dbReference type="GO" id="GO:1903489">
    <property type="term" value="P:positive regulation of lactation"/>
    <property type="evidence" value="ECO:0007669"/>
    <property type="project" value="TreeGrafter"/>
</dbReference>
<dbReference type="GO" id="GO:0046427">
    <property type="term" value="P:positive regulation of receptor signaling pathway via JAK-STAT"/>
    <property type="evidence" value="ECO:0007669"/>
    <property type="project" value="TreeGrafter"/>
</dbReference>
<dbReference type="GO" id="GO:0031667">
    <property type="term" value="P:response to nutrient levels"/>
    <property type="evidence" value="ECO:0007669"/>
    <property type="project" value="TreeGrafter"/>
</dbReference>
<dbReference type="CDD" id="cd10288">
    <property type="entry name" value="prolactin_like"/>
    <property type="match status" value="1"/>
</dbReference>
<dbReference type="FunFam" id="1.20.1250.10:FF:000003">
    <property type="entry name" value="Prolactin"/>
    <property type="match status" value="1"/>
</dbReference>
<dbReference type="Gene3D" id="1.20.1250.10">
    <property type="match status" value="1"/>
</dbReference>
<dbReference type="InterPro" id="IPR009079">
    <property type="entry name" value="4_helix_cytokine-like_core"/>
</dbReference>
<dbReference type="InterPro" id="IPR001400">
    <property type="entry name" value="Somatotropin/Prolactin"/>
</dbReference>
<dbReference type="InterPro" id="IPR018116">
    <property type="entry name" value="Somatotropin_CS"/>
</dbReference>
<dbReference type="PANTHER" id="PTHR11417:SF5">
    <property type="entry name" value="PROLACTIN"/>
    <property type="match status" value="1"/>
</dbReference>
<dbReference type="PANTHER" id="PTHR11417">
    <property type="entry name" value="SOMATOTROPIN,PROLACTIN"/>
    <property type="match status" value="1"/>
</dbReference>
<dbReference type="Pfam" id="PF00103">
    <property type="entry name" value="Hormone_1"/>
    <property type="match status" value="1"/>
</dbReference>
<dbReference type="PRINTS" id="PR00836">
    <property type="entry name" value="SOMATOTROPIN"/>
</dbReference>
<dbReference type="SUPFAM" id="SSF47266">
    <property type="entry name" value="4-helical cytokines"/>
    <property type="match status" value="1"/>
</dbReference>
<dbReference type="PROSITE" id="PS00266">
    <property type="entry name" value="SOMATOTROPIN_1"/>
    <property type="match status" value="1"/>
</dbReference>
<dbReference type="PROSITE" id="PS00338">
    <property type="entry name" value="SOMATOTROPIN_2"/>
    <property type="match status" value="1"/>
</dbReference>
<organism>
    <name type="scientific">Balaenoptera borealis</name>
    <name type="common">Sei whale</name>
    <name type="synonym">Pollack whale</name>
    <dbReference type="NCBI Taxonomy" id="9768"/>
    <lineage>
        <taxon>Eukaryota</taxon>
        <taxon>Metazoa</taxon>
        <taxon>Chordata</taxon>
        <taxon>Craniata</taxon>
        <taxon>Vertebrata</taxon>
        <taxon>Euteleostomi</taxon>
        <taxon>Mammalia</taxon>
        <taxon>Eutheria</taxon>
        <taxon>Laurasiatheria</taxon>
        <taxon>Artiodactyla</taxon>
        <taxon>Whippomorpha</taxon>
        <taxon>Cetacea</taxon>
        <taxon>Mysticeti</taxon>
        <taxon>Balaenopteridae</taxon>
        <taxon>Balaenoptera</taxon>
    </lineage>
</organism>
<name>PRL_BALBO</name>
<proteinExistence type="evidence at protein level"/>
<sequence>LPICPSGAVNCQVSLRDLFDRAVILSHYIHNLSSEMFNEFDKRYAQGRGFITKAIDSCHTSSLQTPEDKEQAQQIHHEVLVSLILGVLRSWNDPLYHLVTEVRGMQEAPDAILSRAIQIEEENKRLLEGMEKIVGQVHPGVKENEVYSVWSGLPSLQMADEDTRLFAFYDLLHCLRRDSHKIDSYLKLLKCRIIYNSNC</sequence>
<comment type="function">
    <text>Prolactin acts primarily on the mammary gland by promoting lactation.</text>
</comment>
<comment type="subunit">
    <text evidence="2">Interacts with PRLR.</text>
</comment>
<comment type="subcellular location">
    <subcellularLocation>
        <location>Secreted</location>
    </subcellularLocation>
</comment>
<comment type="similarity">
    <text evidence="4">Belongs to the somatotropin/prolactin family.</text>
</comment>
<evidence type="ECO:0000250" key="1"/>
<evidence type="ECO:0000250" key="2">
    <source>
        <dbReference type="UniProtKB" id="P01236"/>
    </source>
</evidence>
<evidence type="ECO:0000250" key="3">
    <source>
        <dbReference type="UniProtKB" id="P01239"/>
    </source>
</evidence>
<evidence type="ECO:0000305" key="4"/>
<accession>P33089</accession>
<gene>
    <name type="primary">PRL</name>
</gene>